<name>SYM_RALN1</name>
<reference key="1">
    <citation type="journal article" date="2002" name="Nature">
        <title>Genome sequence of the plant pathogen Ralstonia solanacearum.</title>
        <authorList>
            <person name="Salanoubat M."/>
            <person name="Genin S."/>
            <person name="Artiguenave F."/>
            <person name="Gouzy J."/>
            <person name="Mangenot S."/>
            <person name="Arlat M."/>
            <person name="Billault A."/>
            <person name="Brottier P."/>
            <person name="Camus J.-C."/>
            <person name="Cattolico L."/>
            <person name="Chandler M."/>
            <person name="Choisne N."/>
            <person name="Claudel-Renard C."/>
            <person name="Cunnac S."/>
            <person name="Demange N."/>
            <person name="Gaspin C."/>
            <person name="Lavie M."/>
            <person name="Moisan A."/>
            <person name="Robert C."/>
            <person name="Saurin W."/>
            <person name="Schiex T."/>
            <person name="Siguier P."/>
            <person name="Thebault P."/>
            <person name="Whalen M."/>
            <person name="Wincker P."/>
            <person name="Levy M."/>
            <person name="Weissenbach J."/>
            <person name="Boucher C.A."/>
        </authorList>
    </citation>
    <scope>NUCLEOTIDE SEQUENCE [LARGE SCALE GENOMIC DNA]</scope>
    <source>
        <strain>ATCC BAA-1114 / GMI1000</strain>
    </source>
</reference>
<comment type="function">
    <text evidence="1">Is required not only for elongation of protein synthesis but also for the initiation of all mRNA translation through initiator tRNA(fMet) aminoacylation.</text>
</comment>
<comment type="catalytic activity">
    <reaction evidence="1">
        <text>tRNA(Met) + L-methionine + ATP = L-methionyl-tRNA(Met) + AMP + diphosphate</text>
        <dbReference type="Rhea" id="RHEA:13481"/>
        <dbReference type="Rhea" id="RHEA-COMP:9667"/>
        <dbReference type="Rhea" id="RHEA-COMP:9698"/>
        <dbReference type="ChEBI" id="CHEBI:30616"/>
        <dbReference type="ChEBI" id="CHEBI:33019"/>
        <dbReference type="ChEBI" id="CHEBI:57844"/>
        <dbReference type="ChEBI" id="CHEBI:78442"/>
        <dbReference type="ChEBI" id="CHEBI:78530"/>
        <dbReference type="ChEBI" id="CHEBI:456215"/>
        <dbReference type="EC" id="6.1.1.10"/>
    </reaction>
</comment>
<comment type="cofactor">
    <cofactor evidence="1">
        <name>Zn(2+)</name>
        <dbReference type="ChEBI" id="CHEBI:29105"/>
    </cofactor>
    <text evidence="1">Binds 1 zinc ion per subunit.</text>
</comment>
<comment type="subunit">
    <text evidence="1">Homodimer.</text>
</comment>
<comment type="subcellular location">
    <subcellularLocation>
        <location evidence="1">Cytoplasm</location>
    </subcellularLocation>
</comment>
<comment type="similarity">
    <text evidence="1">Belongs to the class-I aminoacyl-tRNA synthetase family. MetG type 1 subfamily.</text>
</comment>
<sequence length="688" mass="77382">MSERRILVTSALPYANGPIHIGHMVEYIQTDIWVRFQRMRGHETYYVGADDTHGTPVMLRAEKEGITPRQLIERVWTEHKRDFDNFLVSFDNYYSTDSDENRELCERVYLKLKEAGLIDVREVEQFYDPVKEMFLPDRFIKGECPKCGAKDQYGDSCEVCGATYQPTDLKNPYSVVSGATPVRKSSEHYFFKLSDPRCETFLRDWVGDLAQPEATNKMREWLGDEGESTLSDWDISRDAPYFGFEIPGAPGKYFYVWLDAPVGYYASFKNLCGKLGLDFDAWVSTHSTAEQYHFIGKDILYFHTLFWPAMLQFSGHRTPTNVFAHGFLTVDGAKMSKSRGTFITAQSYIDTGLNPEWLRYYFAAKLNATMEDLDLNLDDFIARVNSDLVGKFVNIASRSAGFLVKRFEGRVNDAALANPLMVQLREAAPQIADLYEKREYSKALRTVMELADAVNAYVDTEKPWDLAKDEAQRDKLHAACSVALEAFRLLAVYLKPILPSTVARIEAFLNIEPLNWRAIDAQLSSARPIQPYSHLMTRVDKKQVDALLEANRQSLQATVDAVPAANGTPAVEPMAETIAIDDFAKIDLRVAKIVACQRVEGSNKLLQLTLDVGEGKTRNVFSGIQSAYAPEDLVGKLTVMVANLAPRKMKFGMSEGMVLAASAADEKAQPGLYILEPHAGAVPGMRVR</sequence>
<protein>
    <recommendedName>
        <fullName evidence="1">Methionine--tRNA ligase</fullName>
        <ecNumber evidence="1">6.1.1.10</ecNumber>
    </recommendedName>
    <alternativeName>
        <fullName evidence="1">Methionyl-tRNA synthetase</fullName>
        <shortName evidence="1">MetRS</shortName>
    </alternativeName>
</protein>
<evidence type="ECO:0000255" key="1">
    <source>
        <dbReference type="HAMAP-Rule" id="MF_00098"/>
    </source>
</evidence>
<accession>Q8XWT9</accession>
<feature type="chain" id="PRO_0000139157" description="Methionine--tRNA ligase">
    <location>
        <begin position="1"/>
        <end position="688"/>
    </location>
</feature>
<feature type="domain" description="tRNA-binding" evidence="1">
    <location>
        <begin position="582"/>
        <end position="688"/>
    </location>
</feature>
<feature type="short sequence motif" description="'HIGH' region">
    <location>
        <begin position="13"/>
        <end position="23"/>
    </location>
</feature>
<feature type="short sequence motif" description="'KMSKS' region">
    <location>
        <begin position="334"/>
        <end position="338"/>
    </location>
</feature>
<feature type="binding site" evidence="1">
    <location>
        <position position="144"/>
    </location>
    <ligand>
        <name>Zn(2+)</name>
        <dbReference type="ChEBI" id="CHEBI:29105"/>
    </ligand>
</feature>
<feature type="binding site" evidence="1">
    <location>
        <position position="147"/>
    </location>
    <ligand>
        <name>Zn(2+)</name>
        <dbReference type="ChEBI" id="CHEBI:29105"/>
    </ligand>
</feature>
<feature type="binding site" evidence="1">
    <location>
        <position position="157"/>
    </location>
    <ligand>
        <name>Zn(2+)</name>
        <dbReference type="ChEBI" id="CHEBI:29105"/>
    </ligand>
</feature>
<feature type="binding site" evidence="1">
    <location>
        <position position="160"/>
    </location>
    <ligand>
        <name>Zn(2+)</name>
        <dbReference type="ChEBI" id="CHEBI:29105"/>
    </ligand>
</feature>
<feature type="binding site" evidence="1">
    <location>
        <position position="337"/>
    </location>
    <ligand>
        <name>ATP</name>
        <dbReference type="ChEBI" id="CHEBI:30616"/>
    </ligand>
</feature>
<dbReference type="EC" id="6.1.1.10" evidence="1"/>
<dbReference type="EMBL" id="AL646052">
    <property type="protein sequence ID" value="CAD16088.1"/>
    <property type="molecule type" value="Genomic_DNA"/>
</dbReference>
<dbReference type="RefSeq" id="WP_011002304.1">
    <property type="nucleotide sequence ID" value="NC_003295.1"/>
</dbReference>
<dbReference type="SMR" id="Q8XWT9"/>
<dbReference type="STRING" id="267608.RSc2381"/>
<dbReference type="EnsemblBacteria" id="CAD16088">
    <property type="protein sequence ID" value="CAD16088"/>
    <property type="gene ID" value="RSc2381"/>
</dbReference>
<dbReference type="KEGG" id="rso:RSc2381"/>
<dbReference type="eggNOG" id="COG0073">
    <property type="taxonomic scope" value="Bacteria"/>
</dbReference>
<dbReference type="eggNOG" id="COG0143">
    <property type="taxonomic scope" value="Bacteria"/>
</dbReference>
<dbReference type="HOGENOM" id="CLU_009710_7_0_4"/>
<dbReference type="Proteomes" id="UP000001436">
    <property type="component" value="Chromosome"/>
</dbReference>
<dbReference type="GO" id="GO:0005829">
    <property type="term" value="C:cytosol"/>
    <property type="evidence" value="ECO:0007669"/>
    <property type="project" value="TreeGrafter"/>
</dbReference>
<dbReference type="GO" id="GO:0005524">
    <property type="term" value="F:ATP binding"/>
    <property type="evidence" value="ECO:0007669"/>
    <property type="project" value="UniProtKB-UniRule"/>
</dbReference>
<dbReference type="GO" id="GO:0046872">
    <property type="term" value="F:metal ion binding"/>
    <property type="evidence" value="ECO:0007669"/>
    <property type="project" value="UniProtKB-KW"/>
</dbReference>
<dbReference type="GO" id="GO:0004825">
    <property type="term" value="F:methionine-tRNA ligase activity"/>
    <property type="evidence" value="ECO:0007669"/>
    <property type="project" value="UniProtKB-UniRule"/>
</dbReference>
<dbReference type="GO" id="GO:0000049">
    <property type="term" value="F:tRNA binding"/>
    <property type="evidence" value="ECO:0007669"/>
    <property type="project" value="UniProtKB-KW"/>
</dbReference>
<dbReference type="GO" id="GO:0006431">
    <property type="term" value="P:methionyl-tRNA aminoacylation"/>
    <property type="evidence" value="ECO:0007669"/>
    <property type="project" value="UniProtKB-UniRule"/>
</dbReference>
<dbReference type="CDD" id="cd07957">
    <property type="entry name" value="Anticodon_Ia_Met"/>
    <property type="match status" value="1"/>
</dbReference>
<dbReference type="CDD" id="cd00814">
    <property type="entry name" value="MetRS_core"/>
    <property type="match status" value="1"/>
</dbReference>
<dbReference type="CDD" id="cd02800">
    <property type="entry name" value="tRNA_bind_EcMetRS_like"/>
    <property type="match status" value="1"/>
</dbReference>
<dbReference type="FunFam" id="2.20.28.20:FF:000001">
    <property type="entry name" value="Methionine--tRNA ligase"/>
    <property type="match status" value="1"/>
</dbReference>
<dbReference type="FunFam" id="2.40.50.140:FF:000042">
    <property type="entry name" value="Methionine--tRNA ligase"/>
    <property type="match status" value="1"/>
</dbReference>
<dbReference type="Gene3D" id="3.40.50.620">
    <property type="entry name" value="HUPs"/>
    <property type="match status" value="1"/>
</dbReference>
<dbReference type="Gene3D" id="1.10.730.10">
    <property type="entry name" value="Isoleucyl-tRNA Synthetase, Domain 1"/>
    <property type="match status" value="1"/>
</dbReference>
<dbReference type="Gene3D" id="2.20.28.20">
    <property type="entry name" value="Methionyl-tRNA synthetase, Zn-domain"/>
    <property type="match status" value="1"/>
</dbReference>
<dbReference type="Gene3D" id="2.40.50.140">
    <property type="entry name" value="Nucleic acid-binding proteins"/>
    <property type="match status" value="1"/>
</dbReference>
<dbReference type="HAMAP" id="MF_00098">
    <property type="entry name" value="Met_tRNA_synth_type1"/>
    <property type="match status" value="1"/>
</dbReference>
<dbReference type="InterPro" id="IPR001412">
    <property type="entry name" value="aa-tRNA-synth_I_CS"/>
</dbReference>
<dbReference type="InterPro" id="IPR041872">
    <property type="entry name" value="Anticodon_Met"/>
</dbReference>
<dbReference type="InterPro" id="IPR004495">
    <property type="entry name" value="Met-tRNA-synth_bsu_C"/>
</dbReference>
<dbReference type="InterPro" id="IPR023458">
    <property type="entry name" value="Met-tRNA_ligase_1"/>
</dbReference>
<dbReference type="InterPro" id="IPR014758">
    <property type="entry name" value="Met-tRNA_synth"/>
</dbReference>
<dbReference type="InterPro" id="IPR015413">
    <property type="entry name" value="Methionyl/Leucyl_tRNA_Synth"/>
</dbReference>
<dbReference type="InterPro" id="IPR033911">
    <property type="entry name" value="MetRS_core"/>
</dbReference>
<dbReference type="InterPro" id="IPR029038">
    <property type="entry name" value="MetRS_Zn"/>
</dbReference>
<dbReference type="InterPro" id="IPR012340">
    <property type="entry name" value="NA-bd_OB-fold"/>
</dbReference>
<dbReference type="InterPro" id="IPR014729">
    <property type="entry name" value="Rossmann-like_a/b/a_fold"/>
</dbReference>
<dbReference type="InterPro" id="IPR002547">
    <property type="entry name" value="tRNA-bd_dom"/>
</dbReference>
<dbReference type="InterPro" id="IPR009080">
    <property type="entry name" value="tRNAsynth_Ia_anticodon-bd"/>
</dbReference>
<dbReference type="NCBIfam" id="TIGR00398">
    <property type="entry name" value="metG"/>
    <property type="match status" value="1"/>
</dbReference>
<dbReference type="NCBIfam" id="TIGR00399">
    <property type="entry name" value="metG_C_term"/>
    <property type="match status" value="1"/>
</dbReference>
<dbReference type="NCBIfam" id="NF001100">
    <property type="entry name" value="PRK00133.1"/>
    <property type="match status" value="1"/>
</dbReference>
<dbReference type="PANTHER" id="PTHR45765">
    <property type="entry name" value="METHIONINE--TRNA LIGASE"/>
    <property type="match status" value="1"/>
</dbReference>
<dbReference type="PANTHER" id="PTHR45765:SF1">
    <property type="entry name" value="METHIONINE--TRNA LIGASE, CYTOPLASMIC"/>
    <property type="match status" value="1"/>
</dbReference>
<dbReference type="Pfam" id="PF19303">
    <property type="entry name" value="Anticodon_3"/>
    <property type="match status" value="1"/>
</dbReference>
<dbReference type="Pfam" id="PF09334">
    <property type="entry name" value="tRNA-synt_1g"/>
    <property type="match status" value="1"/>
</dbReference>
<dbReference type="Pfam" id="PF01588">
    <property type="entry name" value="tRNA_bind"/>
    <property type="match status" value="1"/>
</dbReference>
<dbReference type="PRINTS" id="PR01041">
    <property type="entry name" value="TRNASYNTHMET"/>
</dbReference>
<dbReference type="SUPFAM" id="SSF47323">
    <property type="entry name" value="Anticodon-binding domain of a subclass of class I aminoacyl-tRNA synthetases"/>
    <property type="match status" value="1"/>
</dbReference>
<dbReference type="SUPFAM" id="SSF57770">
    <property type="entry name" value="Methionyl-tRNA synthetase (MetRS), Zn-domain"/>
    <property type="match status" value="1"/>
</dbReference>
<dbReference type="SUPFAM" id="SSF50249">
    <property type="entry name" value="Nucleic acid-binding proteins"/>
    <property type="match status" value="1"/>
</dbReference>
<dbReference type="SUPFAM" id="SSF52374">
    <property type="entry name" value="Nucleotidylyl transferase"/>
    <property type="match status" value="1"/>
</dbReference>
<dbReference type="PROSITE" id="PS00178">
    <property type="entry name" value="AA_TRNA_LIGASE_I"/>
    <property type="match status" value="1"/>
</dbReference>
<dbReference type="PROSITE" id="PS50886">
    <property type="entry name" value="TRBD"/>
    <property type="match status" value="1"/>
</dbReference>
<keyword id="KW-0030">Aminoacyl-tRNA synthetase</keyword>
<keyword id="KW-0067">ATP-binding</keyword>
<keyword id="KW-0963">Cytoplasm</keyword>
<keyword id="KW-0436">Ligase</keyword>
<keyword id="KW-0479">Metal-binding</keyword>
<keyword id="KW-0547">Nucleotide-binding</keyword>
<keyword id="KW-0648">Protein biosynthesis</keyword>
<keyword id="KW-1185">Reference proteome</keyword>
<keyword id="KW-0694">RNA-binding</keyword>
<keyword id="KW-0820">tRNA-binding</keyword>
<keyword id="KW-0862">Zinc</keyword>
<gene>
    <name evidence="1" type="primary">metG</name>
    <name type="synonym">metG1</name>
    <name type="ordered locus">RSc2381</name>
    <name type="ORF">RS01164</name>
</gene>
<organism>
    <name type="scientific">Ralstonia nicotianae (strain ATCC BAA-1114 / GMI1000)</name>
    <name type="common">Ralstonia solanacearum</name>
    <dbReference type="NCBI Taxonomy" id="267608"/>
    <lineage>
        <taxon>Bacteria</taxon>
        <taxon>Pseudomonadati</taxon>
        <taxon>Pseudomonadota</taxon>
        <taxon>Betaproteobacteria</taxon>
        <taxon>Burkholderiales</taxon>
        <taxon>Burkholderiaceae</taxon>
        <taxon>Ralstonia</taxon>
        <taxon>Ralstonia solanacearum species complex</taxon>
    </lineage>
</organism>
<proteinExistence type="inferred from homology"/>